<sequence>MNALSGLRMAQESVGLISVAHQAFVTIAGCGVNALSGLQVAQEFVGLISVAHQAFITIAGCGVNALSGLRMAQESVGLISVAHQAFVTIAGCGVNALSGLRMAREL</sequence>
<gene>
    <name type="primary">yahH</name>
    <name type="ordered locus">Z0411.1</name>
    <name type="ordered locus">ECs0371</name>
</gene>
<accession>Q8X367</accession>
<evidence type="ECO:0000305" key="1"/>
<name>YAHH_ECO57</name>
<reference key="1">
    <citation type="journal article" date="2001" name="Nature">
        <title>Genome sequence of enterohaemorrhagic Escherichia coli O157:H7.</title>
        <authorList>
            <person name="Perna N.T."/>
            <person name="Plunkett G. III"/>
            <person name="Burland V."/>
            <person name="Mau B."/>
            <person name="Glasner J.D."/>
            <person name="Rose D.J."/>
            <person name="Mayhew G.F."/>
            <person name="Evans P.S."/>
            <person name="Gregor J."/>
            <person name="Kirkpatrick H.A."/>
            <person name="Posfai G."/>
            <person name="Hackett J."/>
            <person name="Klink S."/>
            <person name="Boutin A."/>
            <person name="Shao Y."/>
            <person name="Miller L."/>
            <person name="Grotbeck E.J."/>
            <person name="Davis N.W."/>
            <person name="Lim A."/>
            <person name="Dimalanta E.T."/>
            <person name="Potamousis K."/>
            <person name="Apodaca J."/>
            <person name="Anantharaman T.S."/>
            <person name="Lin J."/>
            <person name="Yen G."/>
            <person name="Schwartz D.C."/>
            <person name="Welch R.A."/>
            <person name="Blattner F.R."/>
        </authorList>
    </citation>
    <scope>NUCLEOTIDE SEQUENCE [LARGE SCALE GENOMIC DNA]</scope>
    <source>
        <strain>O157:H7 / EDL933 / ATCC 700927 / EHEC</strain>
    </source>
</reference>
<reference key="2">
    <citation type="journal article" date="2001" name="DNA Res.">
        <title>Complete genome sequence of enterohemorrhagic Escherichia coli O157:H7 and genomic comparison with a laboratory strain K-12.</title>
        <authorList>
            <person name="Hayashi T."/>
            <person name="Makino K."/>
            <person name="Ohnishi M."/>
            <person name="Kurokawa K."/>
            <person name="Ishii K."/>
            <person name="Yokoyama K."/>
            <person name="Han C.-G."/>
            <person name="Ohtsubo E."/>
            <person name="Nakayama K."/>
            <person name="Murata T."/>
            <person name="Tanaka M."/>
            <person name="Tobe T."/>
            <person name="Iida T."/>
            <person name="Takami H."/>
            <person name="Honda T."/>
            <person name="Sasakawa C."/>
            <person name="Ogasawara N."/>
            <person name="Yasunaga T."/>
            <person name="Kuhara S."/>
            <person name="Shiba T."/>
            <person name="Hattori M."/>
            <person name="Shinagawa H."/>
        </authorList>
    </citation>
    <scope>NUCLEOTIDE SEQUENCE [LARGE SCALE GENOMIC DNA]</scope>
    <source>
        <strain>O157:H7 / Sakai / RIMD 0509952 / EHEC</strain>
    </source>
</reference>
<keyword id="KW-1185">Reference proteome</keyword>
<comment type="caution">
    <text evidence="1">Could be the product of a pseudogene. Seems to be an unlikely translation of a REP element.</text>
</comment>
<dbReference type="EMBL" id="AE005174">
    <property type="status" value="NOT_ANNOTATED_CDS"/>
    <property type="molecule type" value="Genomic_DNA"/>
</dbReference>
<dbReference type="EMBL" id="BA000007">
    <property type="protein sequence ID" value="BAB33794.1"/>
    <property type="molecule type" value="Genomic_DNA"/>
</dbReference>
<dbReference type="PIR" id="C90675">
    <property type="entry name" value="C90675"/>
</dbReference>
<dbReference type="RefSeq" id="WP_001302280.1">
    <property type="nucleotide sequence ID" value="NZ_VOAI01000005.1"/>
</dbReference>
<dbReference type="STRING" id="386585.gene:10363357"/>
<dbReference type="eggNOG" id="ENOG5031KUU">
    <property type="taxonomic scope" value="Bacteria"/>
</dbReference>
<dbReference type="HOGENOM" id="CLU_144699_0_0_6"/>
<dbReference type="Proteomes" id="UP000000558">
    <property type="component" value="Chromosome"/>
</dbReference>
<dbReference type="Proteomes" id="UP000002519">
    <property type="component" value="Chromosome"/>
</dbReference>
<dbReference type="AntiFam" id="ANF00065">
    <property type="entry name" value="Translation of REP sequence"/>
</dbReference>
<feature type="chain" id="PRO_0000252169" description="Putative uncharacterized protein YahH">
    <location>
        <begin position="1"/>
        <end position="106"/>
    </location>
</feature>
<organism>
    <name type="scientific">Escherichia coli O157:H7</name>
    <dbReference type="NCBI Taxonomy" id="83334"/>
    <lineage>
        <taxon>Bacteria</taxon>
        <taxon>Pseudomonadati</taxon>
        <taxon>Pseudomonadota</taxon>
        <taxon>Gammaproteobacteria</taxon>
        <taxon>Enterobacterales</taxon>
        <taxon>Enterobacteriaceae</taxon>
        <taxon>Escherichia</taxon>
    </lineage>
</organism>
<proteinExistence type="uncertain"/>
<protein>
    <recommendedName>
        <fullName>Putative uncharacterized protein YahH</fullName>
    </recommendedName>
</protein>